<dbReference type="EC" id="2.7.7.38" evidence="1"/>
<dbReference type="EMBL" id="CP001111">
    <property type="protein sequence ID" value="ACF51105.1"/>
    <property type="molecule type" value="Genomic_DNA"/>
</dbReference>
<dbReference type="RefSeq" id="WP_012510612.1">
    <property type="nucleotide sequence ID" value="NC_011071.1"/>
</dbReference>
<dbReference type="SMR" id="B4SQQ0"/>
<dbReference type="STRING" id="391008.Smal_1400"/>
<dbReference type="KEGG" id="smt:Smal_1400"/>
<dbReference type="eggNOG" id="COG1212">
    <property type="taxonomic scope" value="Bacteria"/>
</dbReference>
<dbReference type="HOGENOM" id="CLU_065038_1_0_6"/>
<dbReference type="OrthoDB" id="9815559at2"/>
<dbReference type="UniPathway" id="UPA00030"/>
<dbReference type="UniPathway" id="UPA00358">
    <property type="reaction ID" value="UER00476"/>
</dbReference>
<dbReference type="Proteomes" id="UP000001867">
    <property type="component" value="Chromosome"/>
</dbReference>
<dbReference type="GO" id="GO:0005829">
    <property type="term" value="C:cytosol"/>
    <property type="evidence" value="ECO:0007669"/>
    <property type="project" value="TreeGrafter"/>
</dbReference>
<dbReference type="GO" id="GO:0008690">
    <property type="term" value="F:3-deoxy-manno-octulosonate cytidylyltransferase activity"/>
    <property type="evidence" value="ECO:0007669"/>
    <property type="project" value="UniProtKB-UniRule"/>
</dbReference>
<dbReference type="GO" id="GO:0033468">
    <property type="term" value="P:CMP-keto-3-deoxy-D-manno-octulosonic acid biosynthetic process"/>
    <property type="evidence" value="ECO:0007669"/>
    <property type="project" value="UniProtKB-UniRule"/>
</dbReference>
<dbReference type="GO" id="GO:0009103">
    <property type="term" value="P:lipopolysaccharide biosynthetic process"/>
    <property type="evidence" value="ECO:0007669"/>
    <property type="project" value="UniProtKB-UniRule"/>
</dbReference>
<dbReference type="CDD" id="cd02517">
    <property type="entry name" value="CMP-KDO-Synthetase"/>
    <property type="match status" value="1"/>
</dbReference>
<dbReference type="FunFam" id="3.90.550.10:FF:000011">
    <property type="entry name" value="3-deoxy-manno-octulosonate cytidylyltransferase"/>
    <property type="match status" value="1"/>
</dbReference>
<dbReference type="Gene3D" id="3.90.550.10">
    <property type="entry name" value="Spore Coat Polysaccharide Biosynthesis Protein SpsA, Chain A"/>
    <property type="match status" value="1"/>
</dbReference>
<dbReference type="HAMAP" id="MF_00057">
    <property type="entry name" value="KdsB"/>
    <property type="match status" value="1"/>
</dbReference>
<dbReference type="InterPro" id="IPR003329">
    <property type="entry name" value="Cytidylyl_trans"/>
</dbReference>
<dbReference type="InterPro" id="IPR004528">
    <property type="entry name" value="KdsB"/>
</dbReference>
<dbReference type="InterPro" id="IPR029044">
    <property type="entry name" value="Nucleotide-diphossugar_trans"/>
</dbReference>
<dbReference type="NCBIfam" id="TIGR00466">
    <property type="entry name" value="kdsB"/>
    <property type="match status" value="1"/>
</dbReference>
<dbReference type="NCBIfam" id="NF003952">
    <property type="entry name" value="PRK05450.1-5"/>
    <property type="match status" value="1"/>
</dbReference>
<dbReference type="PANTHER" id="PTHR42866">
    <property type="entry name" value="3-DEOXY-MANNO-OCTULOSONATE CYTIDYLYLTRANSFERASE"/>
    <property type="match status" value="1"/>
</dbReference>
<dbReference type="PANTHER" id="PTHR42866:SF2">
    <property type="entry name" value="3-DEOXY-MANNO-OCTULOSONATE CYTIDYLYLTRANSFERASE, MITOCHONDRIAL"/>
    <property type="match status" value="1"/>
</dbReference>
<dbReference type="Pfam" id="PF02348">
    <property type="entry name" value="CTP_transf_3"/>
    <property type="match status" value="1"/>
</dbReference>
<dbReference type="SUPFAM" id="SSF53448">
    <property type="entry name" value="Nucleotide-diphospho-sugar transferases"/>
    <property type="match status" value="1"/>
</dbReference>
<keyword id="KW-0963">Cytoplasm</keyword>
<keyword id="KW-0448">Lipopolysaccharide biosynthesis</keyword>
<keyword id="KW-0548">Nucleotidyltransferase</keyword>
<keyword id="KW-0808">Transferase</keyword>
<name>KDSB_STRM5</name>
<comment type="function">
    <text evidence="1">Activates KDO (a required 8-carbon sugar) for incorporation into bacterial lipopolysaccharide in Gram-negative bacteria.</text>
</comment>
<comment type="catalytic activity">
    <reaction evidence="1">
        <text>3-deoxy-alpha-D-manno-oct-2-ulosonate + CTP = CMP-3-deoxy-beta-D-manno-octulosonate + diphosphate</text>
        <dbReference type="Rhea" id="RHEA:23448"/>
        <dbReference type="ChEBI" id="CHEBI:33019"/>
        <dbReference type="ChEBI" id="CHEBI:37563"/>
        <dbReference type="ChEBI" id="CHEBI:85986"/>
        <dbReference type="ChEBI" id="CHEBI:85987"/>
        <dbReference type="EC" id="2.7.7.38"/>
    </reaction>
</comment>
<comment type="pathway">
    <text evidence="1">Nucleotide-sugar biosynthesis; CMP-3-deoxy-D-manno-octulosonate biosynthesis; CMP-3-deoxy-D-manno-octulosonate from 3-deoxy-D-manno-octulosonate and CTP: step 1/1.</text>
</comment>
<comment type="pathway">
    <text evidence="1">Bacterial outer membrane biogenesis; lipopolysaccharide biosynthesis.</text>
</comment>
<comment type="subcellular location">
    <subcellularLocation>
        <location evidence="1">Cytoplasm</location>
    </subcellularLocation>
</comment>
<comment type="similarity">
    <text evidence="1">Belongs to the KdsB family.</text>
</comment>
<proteinExistence type="inferred from homology"/>
<reference key="1">
    <citation type="submission" date="2008-06" db="EMBL/GenBank/DDBJ databases">
        <title>Complete sequence of Stenotrophomonas maltophilia R551-3.</title>
        <authorList>
            <consortium name="US DOE Joint Genome Institute"/>
            <person name="Lucas S."/>
            <person name="Copeland A."/>
            <person name="Lapidus A."/>
            <person name="Glavina del Rio T."/>
            <person name="Dalin E."/>
            <person name="Tice H."/>
            <person name="Pitluck S."/>
            <person name="Chain P."/>
            <person name="Malfatti S."/>
            <person name="Shin M."/>
            <person name="Vergez L."/>
            <person name="Lang D."/>
            <person name="Schmutz J."/>
            <person name="Larimer F."/>
            <person name="Land M."/>
            <person name="Hauser L."/>
            <person name="Kyrpides N."/>
            <person name="Mikhailova N."/>
            <person name="Taghavi S."/>
            <person name="Monchy S."/>
            <person name="Newman L."/>
            <person name="Vangronsveld J."/>
            <person name="van der Lelie D."/>
            <person name="Richardson P."/>
        </authorList>
    </citation>
    <scope>NUCLEOTIDE SEQUENCE [LARGE SCALE GENOMIC DNA]</scope>
    <source>
        <strain>R551-3</strain>
    </source>
</reference>
<accession>B4SQQ0</accession>
<evidence type="ECO:0000255" key="1">
    <source>
        <dbReference type="HAMAP-Rule" id="MF_00057"/>
    </source>
</evidence>
<organism>
    <name type="scientific">Stenotrophomonas maltophilia (strain R551-3)</name>
    <dbReference type="NCBI Taxonomy" id="391008"/>
    <lineage>
        <taxon>Bacteria</taxon>
        <taxon>Pseudomonadati</taxon>
        <taxon>Pseudomonadota</taxon>
        <taxon>Gammaproteobacteria</taxon>
        <taxon>Lysobacterales</taxon>
        <taxon>Lysobacteraceae</taxon>
        <taxon>Stenotrophomonas</taxon>
        <taxon>Stenotrophomonas maltophilia group</taxon>
    </lineage>
</organism>
<gene>
    <name evidence="1" type="primary">kdsB</name>
    <name type="ordered locus">Smal_1400</name>
</gene>
<protein>
    <recommendedName>
        <fullName evidence="1">3-deoxy-manno-octulosonate cytidylyltransferase</fullName>
        <ecNumber evidence="1">2.7.7.38</ecNumber>
    </recommendedName>
    <alternativeName>
        <fullName evidence="1">CMP-2-keto-3-deoxyoctulosonic acid synthase</fullName>
        <shortName evidence="1">CKS</shortName>
        <shortName evidence="1">CMP-KDO synthase</shortName>
    </alternativeName>
</protein>
<feature type="chain" id="PRO_0000370165" description="3-deoxy-manno-octulosonate cytidylyltransferase">
    <location>
        <begin position="1"/>
        <end position="257"/>
    </location>
</feature>
<sequence length="257" mass="27560">MTEFVVAIPARYAASRLPGKPLRLLGGEPLVLHVARRALQAGAGEVWVATDDQRIADALSGLAEVKVAMTAASHASGTDRLAECARIAGWADDTVVVNLQGDEPFAPAAGIRAVAEALVGGNAPMSTLATTVEDAHTLFDPNVVKLVRNVRNEAMYFSRAPIAWHRDGFARSRDTLPAGHNWLRHIGIYGYRAGFLQQFAAMPPGQLEQVESLEQLRVLEAGFPISVAISPEPFPPGIDTPEDLERAEVLLQAMAAR</sequence>